<feature type="chain" id="PRO_0000396824" description="F-box only protein 3">
    <location>
        <begin position="1"/>
        <end position="480"/>
    </location>
</feature>
<feature type="domain" description="F-box" evidence="3">
    <location>
        <begin position="10"/>
        <end position="56"/>
    </location>
</feature>
<feature type="domain" description="ApaG" evidence="4">
    <location>
        <begin position="278"/>
        <end position="408"/>
    </location>
</feature>
<feature type="region of interest" description="Disordered" evidence="5">
    <location>
        <begin position="419"/>
        <end position="464"/>
    </location>
</feature>
<feature type="compositionally biased region" description="Acidic residues" evidence="5">
    <location>
        <begin position="419"/>
        <end position="459"/>
    </location>
</feature>
<comment type="function">
    <text evidence="1 2">Substrate recognition component of the SCF (SKP1-CUL1-F-box protein)-type E3 ubiquitin ligase complex, SCF(FBXO3), which mediates the ubiquitination and subsequent proteasomal degradation of target proteins. Mediates the ubiquitination of HIPK2 and probably that of EP300, leading to rapid degradation by the proteasome. In the presence of PML, HIPK2 ubiquitination still occurs, but degradation is prevented. PML, HIPK2 and FBXO3 may act synergically to activate p53/TP53-dependent transactivation. The SCF(FBXO3) also acts as a regulator of inflammation by mediating ubiquitination and degradation of FBXL2 in response to lipopolysaccharide (LPS) (By similarity). The SCF(FBXO3) complex specifically recognizes FBXL2 phosphorylated at 'Thr-404' and promotes its ubiquitination (By similarity).</text>
</comment>
<comment type="pathway">
    <text evidence="2">Protein modification; protein ubiquitination.</text>
</comment>
<comment type="subunit">
    <text evidence="2">Part of a SCF (SKP1-cullin-F-box) protein ligase complex SCF(FBXO3) consisting of FBXO3, SKP1, CUL1 and RBX1. Interacts with PML, interaction is direct and takes place either alone or within the SCF complex.</text>
</comment>
<comment type="subcellular location">
    <subcellularLocation>
        <location evidence="2">Nucleus</location>
    </subcellularLocation>
    <text evidence="2">Colocalizes with PML at the peripheries of nuclear bodies.</text>
</comment>
<protein>
    <recommendedName>
        <fullName>F-box only protein 3</fullName>
    </recommendedName>
</protein>
<proteinExistence type="inferred from homology"/>
<evidence type="ECO:0000250" key="1">
    <source>
        <dbReference type="UniProtKB" id="Q9DC63"/>
    </source>
</evidence>
<evidence type="ECO:0000250" key="2">
    <source>
        <dbReference type="UniProtKB" id="Q9UK99"/>
    </source>
</evidence>
<evidence type="ECO:0000255" key="3">
    <source>
        <dbReference type="PROSITE-ProRule" id="PRU00080"/>
    </source>
</evidence>
<evidence type="ECO:0000255" key="4">
    <source>
        <dbReference type="PROSITE-ProRule" id="PRU00412"/>
    </source>
</evidence>
<evidence type="ECO:0000256" key="5">
    <source>
        <dbReference type="SAM" id="MobiDB-lite"/>
    </source>
</evidence>
<dbReference type="EMBL" id="CH473949">
    <property type="protein sequence ID" value="EDL79684.1"/>
    <property type="molecule type" value="Genomic_DNA"/>
</dbReference>
<dbReference type="RefSeq" id="NP_001103076.1">
    <property type="nucleotide sequence ID" value="NM_001109606.1"/>
</dbReference>
<dbReference type="SMR" id="D4ABP9"/>
<dbReference type="FunCoup" id="D4ABP9">
    <property type="interactions" value="2088"/>
</dbReference>
<dbReference type="STRING" id="10116.ENSRNOP00000014478"/>
<dbReference type="PhosphoSitePlus" id="D4ABP9"/>
<dbReference type="jPOST" id="D4ABP9"/>
<dbReference type="PaxDb" id="10116-ENSRNOP00000014478"/>
<dbReference type="PeptideAtlas" id="D4ABP9"/>
<dbReference type="Ensembl" id="ENSRNOT00000014478.5">
    <property type="protein sequence ID" value="ENSRNOP00000014478.2"/>
    <property type="gene ID" value="ENSRNOG00000009549.5"/>
</dbReference>
<dbReference type="GeneID" id="690634"/>
<dbReference type="KEGG" id="rno:690634"/>
<dbReference type="UCSC" id="RGD:1593433">
    <property type="organism name" value="rat"/>
</dbReference>
<dbReference type="AGR" id="RGD:1593433"/>
<dbReference type="CTD" id="26273"/>
<dbReference type="RGD" id="1593433">
    <property type="gene designation" value="Fbxo3"/>
</dbReference>
<dbReference type="eggNOG" id="KOG4408">
    <property type="taxonomic scope" value="Eukaryota"/>
</dbReference>
<dbReference type="GeneTree" id="ENSGT00940000153571"/>
<dbReference type="HOGENOM" id="CLU_056869_0_0_1"/>
<dbReference type="InParanoid" id="D4ABP9"/>
<dbReference type="OMA" id="YVHDKDC"/>
<dbReference type="OrthoDB" id="2305498at2759"/>
<dbReference type="PhylomeDB" id="D4ABP9"/>
<dbReference type="TreeFam" id="TF329795"/>
<dbReference type="UniPathway" id="UPA00143"/>
<dbReference type="PRO" id="PR:D4ABP9"/>
<dbReference type="Proteomes" id="UP000002494">
    <property type="component" value="Chromosome 3"/>
</dbReference>
<dbReference type="Proteomes" id="UP000234681">
    <property type="component" value="Chromosome 3"/>
</dbReference>
<dbReference type="Bgee" id="ENSRNOG00000009549">
    <property type="expression patterns" value="Expressed in liver and 20 other cell types or tissues"/>
</dbReference>
<dbReference type="GO" id="GO:0005737">
    <property type="term" value="C:cytoplasm"/>
    <property type="evidence" value="ECO:0000318"/>
    <property type="project" value="GO_Central"/>
</dbReference>
<dbReference type="GO" id="GO:0005829">
    <property type="term" value="C:cytosol"/>
    <property type="evidence" value="ECO:0007669"/>
    <property type="project" value="Ensembl"/>
</dbReference>
<dbReference type="GO" id="GO:0005654">
    <property type="term" value="C:nucleoplasm"/>
    <property type="evidence" value="ECO:0007669"/>
    <property type="project" value="Ensembl"/>
</dbReference>
<dbReference type="GO" id="GO:0005634">
    <property type="term" value="C:nucleus"/>
    <property type="evidence" value="ECO:0000266"/>
    <property type="project" value="RGD"/>
</dbReference>
<dbReference type="GO" id="GO:0019005">
    <property type="term" value="C:SCF ubiquitin ligase complex"/>
    <property type="evidence" value="ECO:0000250"/>
    <property type="project" value="UniProtKB"/>
</dbReference>
<dbReference type="GO" id="GO:1990756">
    <property type="term" value="F:ubiquitin-like ligase-substrate adaptor activity"/>
    <property type="evidence" value="ECO:0000250"/>
    <property type="project" value="UniProtKB"/>
</dbReference>
<dbReference type="GO" id="GO:0016567">
    <property type="term" value="P:protein ubiquitination"/>
    <property type="evidence" value="ECO:0007669"/>
    <property type="project" value="UniProtKB-UniPathway"/>
</dbReference>
<dbReference type="GO" id="GO:0032496">
    <property type="term" value="P:response to lipopolysaccharide"/>
    <property type="evidence" value="ECO:0000250"/>
    <property type="project" value="UniProtKB"/>
</dbReference>
<dbReference type="GO" id="GO:0031146">
    <property type="term" value="P:SCF-dependent proteasomal ubiquitin-dependent protein catabolic process"/>
    <property type="evidence" value="ECO:0000250"/>
    <property type="project" value="UniProtKB"/>
</dbReference>
<dbReference type="CDD" id="cd22084">
    <property type="entry name" value="F-box_FBXO3"/>
    <property type="match status" value="1"/>
</dbReference>
<dbReference type="FunFam" id="2.60.40.1470:FF:000002">
    <property type="entry name" value="F-box only protein 3"/>
    <property type="match status" value="1"/>
</dbReference>
<dbReference type="Gene3D" id="1.20.1280.50">
    <property type="match status" value="1"/>
</dbReference>
<dbReference type="Gene3D" id="2.60.40.1470">
    <property type="entry name" value="ApaG domain"/>
    <property type="match status" value="1"/>
</dbReference>
<dbReference type="Gene3D" id="3.40.1580.10">
    <property type="entry name" value="SMI1/KNR4-like"/>
    <property type="match status" value="1"/>
</dbReference>
<dbReference type="InterPro" id="IPR007474">
    <property type="entry name" value="ApaG_domain"/>
</dbReference>
<dbReference type="InterPro" id="IPR036767">
    <property type="entry name" value="ApaG_sf"/>
</dbReference>
<dbReference type="InterPro" id="IPR036047">
    <property type="entry name" value="F-box-like_dom_sf"/>
</dbReference>
<dbReference type="InterPro" id="IPR001810">
    <property type="entry name" value="F-box_dom"/>
</dbReference>
<dbReference type="InterPro" id="IPR052121">
    <property type="entry name" value="F-box_SCF_Substrate_Recog"/>
</dbReference>
<dbReference type="InterPro" id="IPR018958">
    <property type="entry name" value="Knr4/Smi1-like_dom"/>
</dbReference>
<dbReference type="InterPro" id="IPR037883">
    <property type="entry name" value="Knr4/Smi1-like_sf"/>
</dbReference>
<dbReference type="NCBIfam" id="NF003967">
    <property type="entry name" value="PRK05461.1"/>
    <property type="match status" value="1"/>
</dbReference>
<dbReference type="PANTHER" id="PTHR46550">
    <property type="entry name" value="F-BOX ONLY PROTEIN 3"/>
    <property type="match status" value="1"/>
</dbReference>
<dbReference type="PANTHER" id="PTHR46550:SF6">
    <property type="entry name" value="F-BOX ONLY PROTEIN 3"/>
    <property type="match status" value="1"/>
</dbReference>
<dbReference type="Pfam" id="PF04379">
    <property type="entry name" value="DUF525"/>
    <property type="match status" value="1"/>
</dbReference>
<dbReference type="Pfam" id="PF12937">
    <property type="entry name" value="F-box-like"/>
    <property type="match status" value="1"/>
</dbReference>
<dbReference type="Pfam" id="PF09346">
    <property type="entry name" value="SMI1_KNR4"/>
    <property type="match status" value="1"/>
</dbReference>
<dbReference type="SMART" id="SM00256">
    <property type="entry name" value="FBOX"/>
    <property type="match status" value="1"/>
</dbReference>
<dbReference type="SMART" id="SM00860">
    <property type="entry name" value="SMI1_KNR4"/>
    <property type="match status" value="1"/>
</dbReference>
<dbReference type="SUPFAM" id="SSF110069">
    <property type="entry name" value="ApaG-like"/>
    <property type="match status" value="1"/>
</dbReference>
<dbReference type="SUPFAM" id="SSF81383">
    <property type="entry name" value="F-box domain"/>
    <property type="match status" value="1"/>
</dbReference>
<dbReference type="SUPFAM" id="SSF160631">
    <property type="entry name" value="SMI1/KNR4-like"/>
    <property type="match status" value="1"/>
</dbReference>
<dbReference type="PROSITE" id="PS51087">
    <property type="entry name" value="APAG"/>
    <property type="match status" value="1"/>
</dbReference>
<dbReference type="PROSITE" id="PS50181">
    <property type="entry name" value="FBOX"/>
    <property type="match status" value="1"/>
</dbReference>
<keyword id="KW-0539">Nucleus</keyword>
<keyword id="KW-1185">Reference proteome</keyword>
<keyword id="KW-0833">Ubl conjugation pathway</keyword>
<reference key="1">
    <citation type="submission" date="2005-07" db="EMBL/GenBank/DDBJ databases">
        <authorList>
            <person name="Mural R.J."/>
            <person name="Adams M.D."/>
            <person name="Myers E.W."/>
            <person name="Smith H.O."/>
            <person name="Venter J.C."/>
        </authorList>
    </citation>
    <scope>NUCLEOTIDE SEQUENCE [LARGE SCALE GENOMIC DNA]</scope>
</reference>
<sequence length="480" mass="55355">MAAVEAETGLLTLESLPTDPLLLILSFVDYRDLINCCYVSRRLSQLSTHDPLWRRHCKKYWLITEEEKARKNQCWKSLFIATYSDVGRYINHYAAIKKAWDDLKKYLEPRCPRMVLSLKEGAREEDLDAVEAQIGCKLPDDYRCSYRIHNGQKLVVPGLLGSMALSNHYRSEDLLDVDTAAGGFQQRQGLKYCLPLTFCIHTGLSQYIAVEAAEGRNKNEVFYQCPDQMARNPAAIDMFIIGATFTDWFTSYVNNVVSGGFPIIRDQIFRYIHDPECVATTGDITVSVSTSFLPELSSVHPPHYFFTYRIRIEMSRDALPEKACQLDSRYWRITNAKGDVEEVQGPGVVGEFPIISPGRIYEYTSCTTFSTTSGYMEGYYTFHFLYFKDKVFNVAIPRFHMACPTFRVSIARLEMGPDEYEEMEEEAEEEEEEENDDSADMDESDESDEDENESDEGEGEERRRRVFDVPIRRRRCSRLF</sequence>
<gene>
    <name type="primary">Fbxo3</name>
    <name type="synonym">Fbx3</name>
</gene>
<accession>D4ABP9</accession>
<organism>
    <name type="scientific">Rattus norvegicus</name>
    <name type="common">Rat</name>
    <dbReference type="NCBI Taxonomy" id="10116"/>
    <lineage>
        <taxon>Eukaryota</taxon>
        <taxon>Metazoa</taxon>
        <taxon>Chordata</taxon>
        <taxon>Craniata</taxon>
        <taxon>Vertebrata</taxon>
        <taxon>Euteleostomi</taxon>
        <taxon>Mammalia</taxon>
        <taxon>Eutheria</taxon>
        <taxon>Euarchontoglires</taxon>
        <taxon>Glires</taxon>
        <taxon>Rodentia</taxon>
        <taxon>Myomorpha</taxon>
        <taxon>Muroidea</taxon>
        <taxon>Muridae</taxon>
        <taxon>Murinae</taxon>
        <taxon>Rattus</taxon>
    </lineage>
</organism>
<name>FBX3_RAT</name>